<accession>A1C3V7</accession>
<feature type="chain" id="PRO_0000333426" description="Protein sip5">
    <location>
        <begin position="1"/>
        <end position="815"/>
    </location>
</feature>
<feature type="region of interest" description="Disordered" evidence="2">
    <location>
        <begin position="1"/>
        <end position="82"/>
    </location>
</feature>
<feature type="region of interest" description="Disordered" evidence="2">
    <location>
        <begin position="161"/>
        <end position="188"/>
    </location>
</feature>
<feature type="region of interest" description="Disordered" evidence="2">
    <location>
        <begin position="200"/>
        <end position="266"/>
    </location>
</feature>
<feature type="region of interest" description="Disordered" evidence="2">
    <location>
        <begin position="317"/>
        <end position="348"/>
    </location>
</feature>
<feature type="region of interest" description="Disordered" evidence="2">
    <location>
        <begin position="387"/>
        <end position="416"/>
    </location>
</feature>
<feature type="region of interest" description="Disordered" evidence="2">
    <location>
        <begin position="461"/>
        <end position="497"/>
    </location>
</feature>
<feature type="region of interest" description="Disordered" evidence="2">
    <location>
        <begin position="514"/>
        <end position="534"/>
    </location>
</feature>
<feature type="region of interest" description="Disordered" evidence="2">
    <location>
        <begin position="556"/>
        <end position="720"/>
    </location>
</feature>
<feature type="region of interest" description="Disordered" evidence="2">
    <location>
        <begin position="736"/>
        <end position="780"/>
    </location>
</feature>
<feature type="compositionally biased region" description="Polar residues" evidence="2">
    <location>
        <begin position="1"/>
        <end position="30"/>
    </location>
</feature>
<feature type="compositionally biased region" description="Basic and acidic residues" evidence="2">
    <location>
        <begin position="34"/>
        <end position="44"/>
    </location>
</feature>
<feature type="compositionally biased region" description="Basic and acidic residues" evidence="2">
    <location>
        <begin position="61"/>
        <end position="82"/>
    </location>
</feature>
<feature type="compositionally biased region" description="Basic and acidic residues" evidence="2">
    <location>
        <begin position="172"/>
        <end position="188"/>
    </location>
</feature>
<feature type="compositionally biased region" description="Low complexity" evidence="2">
    <location>
        <begin position="200"/>
        <end position="223"/>
    </location>
</feature>
<feature type="compositionally biased region" description="Polar residues" evidence="2">
    <location>
        <begin position="224"/>
        <end position="233"/>
    </location>
</feature>
<feature type="compositionally biased region" description="Basic and acidic residues" evidence="2">
    <location>
        <begin position="317"/>
        <end position="326"/>
    </location>
</feature>
<feature type="compositionally biased region" description="Low complexity" evidence="2">
    <location>
        <begin position="388"/>
        <end position="404"/>
    </location>
</feature>
<feature type="compositionally biased region" description="Polar residues" evidence="2">
    <location>
        <begin position="461"/>
        <end position="471"/>
    </location>
</feature>
<feature type="compositionally biased region" description="Polar residues" evidence="2">
    <location>
        <begin position="482"/>
        <end position="497"/>
    </location>
</feature>
<feature type="compositionally biased region" description="Basic and acidic residues" evidence="2">
    <location>
        <begin position="556"/>
        <end position="585"/>
    </location>
</feature>
<feature type="compositionally biased region" description="Low complexity" evidence="2">
    <location>
        <begin position="635"/>
        <end position="647"/>
    </location>
</feature>
<feature type="compositionally biased region" description="Low complexity" evidence="2">
    <location>
        <begin position="668"/>
        <end position="677"/>
    </location>
</feature>
<feature type="compositionally biased region" description="Low complexity" evidence="2">
    <location>
        <begin position="691"/>
        <end position="704"/>
    </location>
</feature>
<feature type="compositionally biased region" description="Basic and acidic residues" evidence="2">
    <location>
        <begin position="736"/>
        <end position="750"/>
    </location>
</feature>
<feature type="compositionally biased region" description="Low complexity" evidence="2">
    <location>
        <begin position="751"/>
        <end position="767"/>
    </location>
</feature>
<organism>
    <name type="scientific">Aspergillus clavatus (strain ATCC 1007 / CBS 513.65 / DSM 816 / NCTC 3887 / NRRL 1 / QM 1276 / 107)</name>
    <dbReference type="NCBI Taxonomy" id="344612"/>
    <lineage>
        <taxon>Eukaryota</taxon>
        <taxon>Fungi</taxon>
        <taxon>Dikarya</taxon>
        <taxon>Ascomycota</taxon>
        <taxon>Pezizomycotina</taxon>
        <taxon>Eurotiomycetes</taxon>
        <taxon>Eurotiomycetidae</taxon>
        <taxon>Eurotiales</taxon>
        <taxon>Aspergillaceae</taxon>
        <taxon>Aspergillus</taxon>
        <taxon>Aspergillus subgen. Fumigati</taxon>
    </lineage>
</organism>
<keyword id="KW-0963">Cytoplasm</keyword>
<keyword id="KW-1185">Reference proteome</keyword>
<proteinExistence type="inferred from homology"/>
<comment type="function">
    <text evidence="1">May negatively regulate the snf1 kinase.</text>
</comment>
<comment type="subcellular location">
    <subcellularLocation>
        <location evidence="1">Cytoplasm</location>
    </subcellularLocation>
</comment>
<comment type="similarity">
    <text evidence="3">Belongs to the SIP5 family.</text>
</comment>
<reference key="1">
    <citation type="journal article" date="2008" name="PLoS Genet.">
        <title>Genomic islands in the pathogenic filamentous fungus Aspergillus fumigatus.</title>
        <authorList>
            <person name="Fedorova N.D."/>
            <person name="Khaldi N."/>
            <person name="Joardar V.S."/>
            <person name="Maiti R."/>
            <person name="Amedeo P."/>
            <person name="Anderson M.J."/>
            <person name="Crabtree J."/>
            <person name="Silva J.C."/>
            <person name="Badger J.H."/>
            <person name="Albarraq A."/>
            <person name="Angiuoli S."/>
            <person name="Bussey H."/>
            <person name="Bowyer P."/>
            <person name="Cotty P.J."/>
            <person name="Dyer P.S."/>
            <person name="Egan A."/>
            <person name="Galens K."/>
            <person name="Fraser-Liggett C.M."/>
            <person name="Haas B.J."/>
            <person name="Inman J.M."/>
            <person name="Kent R."/>
            <person name="Lemieux S."/>
            <person name="Malavazi I."/>
            <person name="Orvis J."/>
            <person name="Roemer T."/>
            <person name="Ronning C.M."/>
            <person name="Sundaram J.P."/>
            <person name="Sutton G."/>
            <person name="Turner G."/>
            <person name="Venter J.C."/>
            <person name="White O.R."/>
            <person name="Whitty B.R."/>
            <person name="Youngman P."/>
            <person name="Wolfe K.H."/>
            <person name="Goldman G.H."/>
            <person name="Wortman J.R."/>
            <person name="Jiang B."/>
            <person name="Denning D.W."/>
            <person name="Nierman W.C."/>
        </authorList>
    </citation>
    <scope>NUCLEOTIDE SEQUENCE [LARGE SCALE GENOMIC DNA]</scope>
    <source>
        <strain>ATCC 1007 / CBS 513.65 / DSM 816 / NCTC 3887 / NRRL 1 / QM 1276 / 107</strain>
    </source>
</reference>
<name>SIP5_ASPCL</name>
<dbReference type="EMBL" id="DS026990">
    <property type="protein sequence ID" value="EAW15097.1"/>
    <property type="molecule type" value="Genomic_DNA"/>
</dbReference>
<dbReference type="RefSeq" id="XP_001276523.1">
    <property type="nucleotide sequence ID" value="XM_001276522.1"/>
</dbReference>
<dbReference type="SMR" id="A1C3V7"/>
<dbReference type="STRING" id="344612.A1C3V7"/>
<dbReference type="EnsemblFungi" id="EAW15097">
    <property type="protein sequence ID" value="EAW15097"/>
    <property type="gene ID" value="ACLA_057530"/>
</dbReference>
<dbReference type="GeneID" id="4709040"/>
<dbReference type="KEGG" id="act:ACLA_057530"/>
<dbReference type="VEuPathDB" id="FungiDB:ACLA_057530"/>
<dbReference type="eggNOG" id="KOG2789">
    <property type="taxonomic scope" value="Eukaryota"/>
</dbReference>
<dbReference type="HOGENOM" id="CLU_009068_1_0_1"/>
<dbReference type="OMA" id="CFLTYPP"/>
<dbReference type="OrthoDB" id="21471at2759"/>
<dbReference type="Proteomes" id="UP000006701">
    <property type="component" value="Unassembled WGS sequence"/>
</dbReference>
<dbReference type="GO" id="GO:0005737">
    <property type="term" value="C:cytoplasm"/>
    <property type="evidence" value="ECO:0007669"/>
    <property type="project" value="UniProtKB-SubCell"/>
</dbReference>
<dbReference type="CDD" id="cd24139">
    <property type="entry name" value="SIP5-like"/>
    <property type="match status" value="1"/>
</dbReference>
<dbReference type="InterPro" id="IPR039301">
    <property type="entry name" value="Sip5/DA2"/>
</dbReference>
<dbReference type="PANTHER" id="PTHR31315">
    <property type="entry name" value="PROTEIN SIP5"/>
    <property type="match status" value="1"/>
</dbReference>
<dbReference type="PANTHER" id="PTHR31315:SF1">
    <property type="entry name" value="PROTEIN SIP5"/>
    <property type="match status" value="1"/>
</dbReference>
<protein>
    <recommendedName>
        <fullName>Protein sip5</fullName>
    </recommendedName>
</protein>
<evidence type="ECO:0000250" key="1"/>
<evidence type="ECO:0000256" key="2">
    <source>
        <dbReference type="SAM" id="MobiDB-lite"/>
    </source>
</evidence>
<evidence type="ECO:0000305" key="3"/>
<gene>
    <name type="primary">sip5</name>
    <name type="ORF">ACLA_057530</name>
</gene>
<sequence length="815" mass="88129">MGNSQTKESRPSLSSSNRRGHQWGSSSSHGRSPYGDRHHAEGSRSRGSRPDLSMFGIGGSSDRDVATLEHRRETKQEREARRLEKERVARLKERERSMREEHVDGGYLVTQGVYVGTEDFNKAVTRQLMIERRLAPFWRGLNDFSDSWTEHQLMAAARGLPIPPPDEIPPELEYKNPPRSTEEAKESTIQHLMVPITSRSQSYGSEASQSSTPTHSLPSPTSPFASGTSSSPLFRTRAKTLASLTSSRHGSQVDAGPKEIQLPKDPFVNGQPIEAYLYKDATECPICFLYYPPYLNRTRCCDQPICSECFVQIKRPDPHPPEHGETDSNAANSTSDRDRQESQDGQLVSGPAACPFCVQPEFGVTYAPPPFRRGLVYATDSSLRPTFASPVSSSSSLSSANPPAITGRRRATSLSANDPTVITTDRIRPDWAQKLANARAHAARRSAAATALHTAAYLMNTNSSGNESRNFSLGRRGVMRRTGTSENQSVSNRSGSPALQALAFLTDRRAVGPETDFAEEGGGNMAPPRNSSRRNRIDDLEEMMMMEAIRLSLASEEERRRKEEKEAKKEAKRREKESKKAEKAARKLGVYSNNASSSALDVLSDPRHGKGSSSSSSMTGEDTACGKGKEVERMPPSTTNATASPSSLEIPSDAANSSPVAHVIEPGSSAQAATTQSLARELPKPSHLRHVSSASSSFSSLVDSTPDDPTGAYDGSATATEPMFNFRSLAAVIGDEDKGVESTEHVEDTSSRATVASSASGVAPSATETSGAPATGVEPVSVETITENGDCLMPKELETRSVEITHTAPNTEATS</sequence>